<protein>
    <recommendedName>
        <fullName evidence="1">Putative hydro-lyase Bcenmc03_3969</fullName>
        <ecNumber evidence="1">4.2.1.-</ecNumber>
    </recommendedName>
</protein>
<reference key="1">
    <citation type="submission" date="2008-02" db="EMBL/GenBank/DDBJ databases">
        <title>Complete sequence of chromosome 2 of Burkholderia cenocepacia MC0-3.</title>
        <authorList>
            <person name="Copeland A."/>
            <person name="Lucas S."/>
            <person name="Lapidus A."/>
            <person name="Barry K."/>
            <person name="Bruce D."/>
            <person name="Goodwin L."/>
            <person name="Glavina del Rio T."/>
            <person name="Dalin E."/>
            <person name="Tice H."/>
            <person name="Pitluck S."/>
            <person name="Chain P."/>
            <person name="Malfatti S."/>
            <person name="Shin M."/>
            <person name="Vergez L."/>
            <person name="Schmutz J."/>
            <person name="Larimer F."/>
            <person name="Land M."/>
            <person name="Hauser L."/>
            <person name="Kyrpides N."/>
            <person name="Mikhailova N."/>
            <person name="Tiedje J."/>
            <person name="Richardson P."/>
        </authorList>
    </citation>
    <scope>NUCLEOTIDE SEQUENCE [LARGE SCALE GENOMIC DNA]</scope>
    <source>
        <strain>MC0-3</strain>
    </source>
</reference>
<dbReference type="EC" id="4.2.1.-" evidence="1"/>
<dbReference type="EMBL" id="CP000959">
    <property type="protein sequence ID" value="ACA93120.1"/>
    <property type="molecule type" value="Genomic_DNA"/>
</dbReference>
<dbReference type="RefSeq" id="WP_012338708.1">
    <property type="nucleotide sequence ID" value="NC_010515.1"/>
</dbReference>
<dbReference type="SMR" id="B1K6C3"/>
<dbReference type="GeneID" id="83050736"/>
<dbReference type="KEGG" id="bcm:Bcenmc03_3969"/>
<dbReference type="HOGENOM" id="CLU_059759_0_0_4"/>
<dbReference type="Proteomes" id="UP000002169">
    <property type="component" value="Chromosome 2"/>
</dbReference>
<dbReference type="GO" id="GO:0016829">
    <property type="term" value="F:lyase activity"/>
    <property type="evidence" value="ECO:0007669"/>
    <property type="project" value="UniProtKB-KW"/>
</dbReference>
<dbReference type="FunFam" id="3.30.2040.10:FF:000001">
    <property type="entry name" value="D-glutamate cyclase, mitochondrial"/>
    <property type="match status" value="1"/>
</dbReference>
<dbReference type="Gene3D" id="3.40.1640.10">
    <property type="entry name" value="PSTPO5379-like"/>
    <property type="match status" value="1"/>
</dbReference>
<dbReference type="Gene3D" id="3.30.2040.10">
    <property type="entry name" value="PSTPO5379-like domain"/>
    <property type="match status" value="1"/>
</dbReference>
<dbReference type="HAMAP" id="MF_01830">
    <property type="entry name" value="Hydro_lyase"/>
    <property type="match status" value="1"/>
</dbReference>
<dbReference type="InterPro" id="IPR009906">
    <property type="entry name" value="D-Glu_cyclase"/>
</dbReference>
<dbReference type="InterPro" id="IPR038021">
    <property type="entry name" value="Putative_hydro-lyase"/>
</dbReference>
<dbReference type="InterPro" id="IPR016938">
    <property type="entry name" value="UPF0317"/>
</dbReference>
<dbReference type="NCBIfam" id="NF003969">
    <property type="entry name" value="PRK05463.1"/>
    <property type="match status" value="1"/>
</dbReference>
<dbReference type="PANTHER" id="PTHR32022">
    <property type="entry name" value="D-GLUTAMATE CYCLASE, MITOCHONDRIAL"/>
    <property type="match status" value="1"/>
</dbReference>
<dbReference type="PANTHER" id="PTHR32022:SF10">
    <property type="entry name" value="D-GLUTAMATE CYCLASE, MITOCHONDRIAL"/>
    <property type="match status" value="1"/>
</dbReference>
<dbReference type="Pfam" id="PF07286">
    <property type="entry name" value="D-Glu_cyclase"/>
    <property type="match status" value="1"/>
</dbReference>
<dbReference type="PIRSF" id="PIRSF029755">
    <property type="entry name" value="UCP029755"/>
    <property type="match status" value="1"/>
</dbReference>
<dbReference type="SUPFAM" id="SSF160920">
    <property type="entry name" value="PSTPO5379-like"/>
    <property type="match status" value="1"/>
</dbReference>
<proteinExistence type="inferred from homology"/>
<name>Y3969_BURO0</name>
<evidence type="ECO:0000255" key="1">
    <source>
        <dbReference type="HAMAP-Rule" id="MF_01830"/>
    </source>
</evidence>
<comment type="similarity">
    <text evidence="1">Belongs to the D-glutamate cyclase family.</text>
</comment>
<organism>
    <name type="scientific">Burkholderia orbicola (strain MC0-3)</name>
    <dbReference type="NCBI Taxonomy" id="406425"/>
    <lineage>
        <taxon>Bacteria</taxon>
        <taxon>Pseudomonadati</taxon>
        <taxon>Pseudomonadota</taxon>
        <taxon>Betaproteobacteria</taxon>
        <taxon>Burkholderiales</taxon>
        <taxon>Burkholderiaceae</taxon>
        <taxon>Burkholderia</taxon>
        <taxon>Burkholderia cepacia complex</taxon>
        <taxon>Burkholderia orbicola</taxon>
    </lineage>
</organism>
<gene>
    <name type="ordered locus">Bcenmc03_3969</name>
</gene>
<keyword id="KW-0456">Lyase</keyword>
<accession>B1K6C3</accession>
<sequence length="257" mass="28015">MTPSEFRQSVRRGAFRGPTAGHCGPFAQANLAILPDAYAHDFLRFCQANPKACPLLGVGEPGAFRIDALGDDLDIRTDVPSYNVYRDGRLTERVESLDALWRDDFVVFAIGCSFSFEDMLAREGIGLRHVEEGRNVPMYRTSIANRRAGIFGGQLVVSMRPLRGADAIRAVQITSRFPGVHGAPIHIGDPRELGIEDLNAPEFGDAVTIRDGELPVFWACGVTPQTALMDAKLPIAIAHTPGYMLMTDITNASLAVF</sequence>
<feature type="chain" id="PRO_0000379823" description="Putative hydro-lyase Bcenmc03_3969">
    <location>
        <begin position="1"/>
        <end position="257"/>
    </location>
</feature>